<sequence>MLHRYLPMTEEDKKEMLQTIGVQTIDELFSDIPESVRFKGDLKIKEAKSEPELLKELSQMASKNANLKEYASFLGAGVYDHYAPVIVDHVISRSEFYTAYTPYQPEISQGELQAIFEFQTMICELTGMDVANSSMYDGGTALAEAAMLAAGHTRKKKILVSSAVHPESRAVLETYAKGQHLEVVEINHKDGVTDLDVLQSEVDDTVACVIVQYPNFFGQVEKLADIEKIVHQQKSLFIVSSNPLSLGALTPPGKFGADIVIGDAQPFGIPTQFGGPHCGYFATTKAFMRKIPGRLVGQTVDSDGKRGFVLTLQAREQHIRRDKATSNICSNQALNALAASVAMTALGKQGVKEMARQNISKAQYAKRQFEAKGFTVTFAGPFFNEFVVDCKRPVKEVNDALLQKNIIGGYDLGRDYKEHENHMLVAVTELRTKEEIDTLVNEMGAIQ</sequence>
<reference key="1">
    <citation type="submission" date="2009-04" db="EMBL/GenBank/DDBJ databases">
        <title>Genome sequence of Bacillus anthracis A0248.</title>
        <authorList>
            <person name="Dodson R.J."/>
            <person name="Munk A.C."/>
            <person name="Bruce D."/>
            <person name="Detter C."/>
            <person name="Tapia R."/>
            <person name="Sutton G."/>
            <person name="Sims D."/>
            <person name="Brettin T."/>
        </authorList>
    </citation>
    <scope>NUCLEOTIDE SEQUENCE [LARGE SCALE GENOMIC DNA]</scope>
    <source>
        <strain>A0248</strain>
    </source>
</reference>
<accession>C3P8D4</accession>
<organism>
    <name type="scientific">Bacillus anthracis (strain A0248)</name>
    <dbReference type="NCBI Taxonomy" id="592021"/>
    <lineage>
        <taxon>Bacteria</taxon>
        <taxon>Bacillati</taxon>
        <taxon>Bacillota</taxon>
        <taxon>Bacilli</taxon>
        <taxon>Bacillales</taxon>
        <taxon>Bacillaceae</taxon>
        <taxon>Bacillus</taxon>
        <taxon>Bacillus cereus group</taxon>
    </lineage>
</organism>
<evidence type="ECO:0000255" key="1">
    <source>
        <dbReference type="HAMAP-Rule" id="MF_00712"/>
    </source>
</evidence>
<feature type="chain" id="PRO_1000147975" description="Probable glycine dehydrogenase (decarboxylating) subunit 1">
    <location>
        <begin position="1"/>
        <end position="447"/>
    </location>
</feature>
<proteinExistence type="inferred from homology"/>
<gene>
    <name evidence="1" type="primary">gcvPA</name>
    <name type="ordered locus">BAA_4466</name>
</gene>
<name>GCSPA_BACAA</name>
<comment type="function">
    <text evidence="1">The glycine cleavage system catalyzes the degradation of glycine. The P protein binds the alpha-amino group of glycine through its pyridoxal phosphate cofactor; CO(2) is released and the remaining methylamine moiety is then transferred to the lipoamide cofactor of the H protein.</text>
</comment>
<comment type="catalytic activity">
    <reaction evidence="1">
        <text>N(6)-[(R)-lipoyl]-L-lysyl-[glycine-cleavage complex H protein] + glycine + H(+) = N(6)-[(R)-S(8)-aminomethyldihydrolipoyl]-L-lysyl-[glycine-cleavage complex H protein] + CO2</text>
        <dbReference type="Rhea" id="RHEA:24304"/>
        <dbReference type="Rhea" id="RHEA-COMP:10494"/>
        <dbReference type="Rhea" id="RHEA-COMP:10495"/>
        <dbReference type="ChEBI" id="CHEBI:15378"/>
        <dbReference type="ChEBI" id="CHEBI:16526"/>
        <dbReference type="ChEBI" id="CHEBI:57305"/>
        <dbReference type="ChEBI" id="CHEBI:83099"/>
        <dbReference type="ChEBI" id="CHEBI:83143"/>
        <dbReference type="EC" id="1.4.4.2"/>
    </reaction>
</comment>
<comment type="subunit">
    <text evidence="1">The glycine cleavage system is composed of four proteins: P, T, L and H. In this organism, the P 'protein' is a heterodimer of two subunits.</text>
</comment>
<comment type="similarity">
    <text evidence="1">Belongs to the GcvP family. N-terminal subunit subfamily.</text>
</comment>
<protein>
    <recommendedName>
        <fullName evidence="1">Probable glycine dehydrogenase (decarboxylating) subunit 1</fullName>
        <ecNumber evidence="1">1.4.4.2</ecNumber>
    </recommendedName>
    <alternativeName>
        <fullName evidence="1">Glycine cleavage system P-protein subunit 1</fullName>
    </alternativeName>
    <alternativeName>
        <fullName evidence="1">Glycine decarboxylase subunit 1</fullName>
    </alternativeName>
    <alternativeName>
        <fullName evidence="1">Glycine dehydrogenase (aminomethyl-transferring) subunit 1</fullName>
    </alternativeName>
</protein>
<dbReference type="EC" id="1.4.4.2" evidence="1"/>
<dbReference type="EMBL" id="CP001598">
    <property type="protein sequence ID" value="ACQ47764.1"/>
    <property type="molecule type" value="Genomic_DNA"/>
</dbReference>
<dbReference type="RefSeq" id="WP_000903231.1">
    <property type="nucleotide sequence ID" value="NC_012659.1"/>
</dbReference>
<dbReference type="SMR" id="C3P8D4"/>
<dbReference type="GeneID" id="93006874"/>
<dbReference type="KEGG" id="bai:BAA_4466"/>
<dbReference type="HOGENOM" id="CLU_004620_0_2_9"/>
<dbReference type="GO" id="GO:0004375">
    <property type="term" value="F:glycine dehydrogenase (decarboxylating) activity"/>
    <property type="evidence" value="ECO:0007669"/>
    <property type="project" value="UniProtKB-EC"/>
</dbReference>
<dbReference type="GO" id="GO:0019464">
    <property type="term" value="P:glycine decarboxylation via glycine cleavage system"/>
    <property type="evidence" value="ECO:0007669"/>
    <property type="project" value="UniProtKB-UniRule"/>
</dbReference>
<dbReference type="GO" id="GO:0009116">
    <property type="term" value="P:nucleoside metabolic process"/>
    <property type="evidence" value="ECO:0007669"/>
    <property type="project" value="InterPro"/>
</dbReference>
<dbReference type="CDD" id="cd00613">
    <property type="entry name" value="GDC-P"/>
    <property type="match status" value="1"/>
</dbReference>
<dbReference type="FunFam" id="3.40.640.10:FF:000113">
    <property type="entry name" value="Probable glycine dehydrogenase (decarboxylating) subunit 1"/>
    <property type="match status" value="1"/>
</dbReference>
<dbReference type="Gene3D" id="3.90.1150.10">
    <property type="entry name" value="Aspartate Aminotransferase, domain 1"/>
    <property type="match status" value="1"/>
</dbReference>
<dbReference type="Gene3D" id="3.40.640.10">
    <property type="entry name" value="Type I PLP-dependent aspartate aminotransferase-like (Major domain)"/>
    <property type="match status" value="1"/>
</dbReference>
<dbReference type="HAMAP" id="MF_00712">
    <property type="entry name" value="GcvPA"/>
    <property type="match status" value="1"/>
</dbReference>
<dbReference type="InterPro" id="IPR023010">
    <property type="entry name" value="GcvPA"/>
</dbReference>
<dbReference type="InterPro" id="IPR049315">
    <property type="entry name" value="GDC-P_N"/>
</dbReference>
<dbReference type="InterPro" id="IPR020581">
    <property type="entry name" value="GDC_P"/>
</dbReference>
<dbReference type="InterPro" id="IPR015424">
    <property type="entry name" value="PyrdxlP-dep_Trfase"/>
</dbReference>
<dbReference type="InterPro" id="IPR015421">
    <property type="entry name" value="PyrdxlP-dep_Trfase_major"/>
</dbReference>
<dbReference type="InterPro" id="IPR015422">
    <property type="entry name" value="PyrdxlP-dep_Trfase_small"/>
</dbReference>
<dbReference type="NCBIfam" id="NF001696">
    <property type="entry name" value="PRK00451.1"/>
    <property type="match status" value="1"/>
</dbReference>
<dbReference type="PANTHER" id="PTHR42806">
    <property type="entry name" value="GLYCINE CLEAVAGE SYSTEM P-PROTEIN"/>
    <property type="match status" value="1"/>
</dbReference>
<dbReference type="PANTHER" id="PTHR42806:SF1">
    <property type="entry name" value="GLYCINE DEHYDROGENASE (DECARBOXYLATING)"/>
    <property type="match status" value="1"/>
</dbReference>
<dbReference type="Pfam" id="PF02347">
    <property type="entry name" value="GDC-P"/>
    <property type="match status" value="1"/>
</dbReference>
<dbReference type="PIRSF" id="PIRSF006815">
    <property type="entry name" value="GcvPA"/>
    <property type="match status" value="1"/>
</dbReference>
<dbReference type="SUPFAM" id="SSF53383">
    <property type="entry name" value="PLP-dependent transferases"/>
    <property type="match status" value="1"/>
</dbReference>
<keyword id="KW-0560">Oxidoreductase</keyword>